<keyword id="KW-0002">3D-structure</keyword>
<keyword id="KW-1072">Activation of host autophagy by virus</keyword>
<keyword id="KW-0067">ATP-binding</keyword>
<keyword id="KW-0068">Autocatalytic cleavage</keyword>
<keyword id="KW-0167">Capsid protein</keyword>
<keyword id="KW-0191">Covalent protein-RNA linkage</keyword>
<keyword id="KW-0235">DNA replication</keyword>
<keyword id="KW-1262">Eukaryotic host gene expression shutoff by virus</keyword>
<keyword id="KW-1193">Eukaryotic host translation shutoff by virus</keyword>
<keyword id="KW-0347">Helicase</keyword>
<keyword id="KW-1035">Host cytoplasm</keyword>
<keyword id="KW-1036">Host cytoplasmic vesicle</keyword>
<keyword id="KW-1190">Host gene expression shutoff by virus</keyword>
<keyword id="KW-1043">Host membrane</keyword>
<keyword id="KW-1192">Host mRNA suppression by virus</keyword>
<keyword id="KW-1048">Host nucleus</keyword>
<keyword id="KW-0945">Host-virus interaction</keyword>
<keyword id="KW-0378">Hydrolase</keyword>
<keyword id="KW-1090">Inhibition of host innate immune response by virus</keyword>
<keyword id="KW-1099">Inhibition of host mRNA nuclear export by virus</keyword>
<keyword id="KW-1088">Inhibition of host RIG-I by virus</keyword>
<keyword id="KW-1113">Inhibition of host RLR pathway by virus</keyword>
<keyword id="KW-0407">Ion channel</keyword>
<keyword id="KW-0406">Ion transport</keyword>
<keyword id="KW-0449">Lipoprotein</keyword>
<keyword id="KW-0460">Magnesium</keyword>
<keyword id="KW-0472">Membrane</keyword>
<keyword id="KW-0479">Metal-binding</keyword>
<keyword id="KW-0519">Myristate</keyword>
<keyword id="KW-0547">Nucleotide-binding</keyword>
<keyword id="KW-0548">Nucleotidyltransferase</keyword>
<keyword id="KW-0597">Phosphoprotein</keyword>
<keyword id="KW-1172">Pore-mediated penetration of viral genome into host cell</keyword>
<keyword id="KW-0645">Protease</keyword>
<keyword id="KW-1185">Reference proteome</keyword>
<keyword id="KW-0677">Repeat</keyword>
<keyword id="KW-0694">RNA-binding</keyword>
<keyword id="KW-0696">RNA-directed RNA polymerase</keyword>
<keyword id="KW-1143">T=pseudo3 icosahedral capsid protein</keyword>
<keyword id="KW-0788">Thiol protease</keyword>
<keyword id="KW-0808">Transferase</keyword>
<keyword id="KW-0813">Transport</keyword>
<keyword id="KW-1161">Viral attachment to host cell</keyword>
<keyword id="KW-0899">Viral immunoevasion</keyword>
<keyword id="KW-1182">Viral ion channel</keyword>
<keyword id="KW-1162">Viral penetration into host cytoplasm</keyword>
<keyword id="KW-0693">Viral RNA replication</keyword>
<keyword id="KW-0946">Virion</keyword>
<keyword id="KW-1164">Virus endocytosis by host</keyword>
<keyword id="KW-1160">Virus entry into host cell</keyword>
<keyword id="KW-0862">Zinc</keyword>
<keyword id="KW-0863">Zinc-finger</keyword>
<sequence>MGAQVSRQNVGTHSTQNSVSNGSSLNYFNINYFKDAASSGASRLDFSQDPSKFTDPVKDVLEKGIPTLQSPTVEACGYSDRLIQITRGDSTITSQDTANAVVAYGVWPSYLTPDDATAIDKPTQPDTSSNRFYTLDSRSWTSASSGWWWKLPDALKNMGIFGENMFYHFLGRSGYTIHVQCNSSKFHQGLLIVAAIPEHQLASATSGNVSVGYNHTHPGEQGREVVPSRTSSDNKRPSDDSWLNFDGTLLGNLPIYPHQYINLRTNNSATLILPYVNAVPMDSMLRHNNWSLVIIPICPLQVQPGGTQSIPITVSISPMFSEFSGPRSKVVFSTTQGLPVMLTPGSGQFLTTDDTQSPSAFPYFHPTKEIFIPGQVRNLIEMCQVDTLIPVNNTQENVRSVNMYTVDLRTQVDLAKEVFSIPVDIASQPLATTLIGELASYYTHWTGSLRFSFMFCGSASSTLKLLIAYTPPGVGKPKSRREAMLGTHLVWDVGLQSTASLVVPWVSASHFRFTTPDTYSSAGYITCWYQTNFVVPDSTPDNAKMVCMVSACKDFCLRLARDTNLHTQEGVLTQNPVENYIDSVLNEVLVVPNIQPSTSVSSHAAPALDAAETGHTSSVQPEDMIETRYVITDQTRDETSIESFLGRSGCIAMIEFNTSSDKTEHDKIGKGFKTWKVSLQEMAQIRRKYELFTYTRFDSEITIVTAAAAQGNDSGHIVLQFMYVPPGAPVPEKRDDYTWQSGTNASVFWQEGQPYPRFTIPFMSIASAYYMFYDGYDGDSAASKYGSVVTNDMGTICVRIVTSNQKHDSNIVCRIYHKAKHIKAWCPRPPRAVAYQHTHSTNYIPSNGEATTQIKTRPDVFTVTNVGPSSMFVHVGNLIYRNLHLFNSDLDDSILVSYSSDLIIYRTNTEGNDVIPNCDCTECTYYCHHKDRYFPIRVTAHDWYEIQESEYYPKHIQYNLLIGEGPCEPGDCGGKLLCKHGVIGMITAGGEGHVAFIDLRKFQCAEEQGLSDYVEHLGQVFGVGFVDSIKQQVNFINPTSKIGSKVIKWLLRIVSAMIIMVRNSSDPQTVIATLTLLGCSGSPWRFLKEKLCAWLQLSYVHKQSDSWLKKFTEACNAARGLEWIGQKISKFIDWIKSMLPQAQLKIDYLTKLKQLNLLEKQIETIRLAPASVQEKIFIEINTLHDLSLKFLPLYASEARRIKNLYIKCSNVIKGGKRNEPVAVLIHGSPGTGKSLATSVLARMLTVETDIYSLPPDPKYFDGYDQQSVVIMDDIMQNPSGEDMTLFCQMVSSVPFIPPMADLPDKGKPFTSKFVLASTNHTLLTPPTVSSLPAMARRFYFDLDIQVKKEYLLDGKLDIAKSFRPCDVNIKIGNAKCCPFICGKAVEFKDRNSCTTLSLSQLYSHIKEEDRRRSSAAQAMEAIFQGIDLQSPPPPAIADLLRSVKTPEIIKYCQDNNWIVPAECSIERDLGIANMTIGIIANVVSIVGVIYIIYKLFCTLQGPYSGEPKPKSRAPERRVVTQGPEEEFGRSLLKHNCCVVTTDKGKFTGLGIYDQVMVLPTHSDPGSEILVDGVKVKVSDSYDLHNHEGVKLEITVVKLIRNEKFKDIRKYLPSREDDYPACNLALLANQDEPTIISVGDAVSYGNILLSGTNTARMIKYHYPTKAGYCGGVLYKVGSILGIHVGGNGRDGFSAMLLKSYFGETQGLITKELPVSVKNLPSVHVSSKTRLQPSVFHDVFPGTKEPAVLSSNDPRLETDFDSALFSKYKGNPACQVTPHMKIAVAHYAAQLSTLDINPQPLSLEESVFGIEGLEALDLNTSAGFPYVSLGIKKKDLIDKKTKDITKLRKAIDEYGIDLPMVTFLKDELRKKEKIKDGKTRVIEANSVNDTVLFRSVFGNLFSAFHKNPGIVTGSAVGCDPEVFWSTIPLMLDGECLMAFDYSNYDGSLHPVWFKCLSMLLEDIGFSSQLINQICNSKHIYKSKYYEVEGGMPSGCAGTSIFNTIINNIIIRTLVLDAYKNIDLDKLKILAYGDDVIFSYNFKLDMAVLAKEGEKYGLTITPADKSDVFQELTYKNVTFLKRGFRADERHSFLIHPTFPVAEIHDSIRWTKNPSCMQEHVLSLCHLMWHNGRHAYQEFIKGIRSVSAGRALYIPAYEVLEHEWYEKF</sequence>
<protein>
    <recommendedName>
        <fullName>Genome polyprotein</fullName>
    </recommendedName>
    <component>
        <recommendedName>
            <fullName>P1</fullName>
        </recommendedName>
    </component>
    <component>
        <recommendedName>
            <fullName>Capsid protein VP0</fullName>
        </recommendedName>
        <alternativeName>
            <fullName>VP4-VP2</fullName>
        </alternativeName>
    </component>
    <component>
        <recommendedName>
            <fullName>Capsid protein VP4</fullName>
        </recommendedName>
        <alternativeName>
            <fullName>P1A</fullName>
        </alternativeName>
        <alternativeName>
            <fullName>Virion protein 4</fullName>
        </alternativeName>
    </component>
    <component>
        <recommendedName>
            <fullName>Capsid protein VP2</fullName>
        </recommendedName>
        <alternativeName>
            <fullName>P1B</fullName>
        </alternativeName>
        <alternativeName>
            <fullName>Virion protein 2</fullName>
        </alternativeName>
    </component>
    <component>
        <recommendedName>
            <fullName>Capsid protein VP3</fullName>
        </recommendedName>
        <alternativeName>
            <fullName>P1C</fullName>
        </alternativeName>
        <alternativeName>
            <fullName>Virion protein 3</fullName>
        </alternativeName>
    </component>
    <component>
        <recommendedName>
            <fullName>Capsid protein VP1</fullName>
        </recommendedName>
        <alternativeName>
            <fullName>P1D</fullName>
        </alternativeName>
        <alternativeName>
            <fullName>Virion protein 1</fullName>
        </alternativeName>
    </component>
    <component>
        <recommendedName>
            <fullName>P2</fullName>
        </recommendedName>
    </component>
    <component>
        <recommendedName>
            <fullName>Protease 2A</fullName>
            <shortName>P2A</shortName>
            <ecNumber evidence="2">3.4.22.29</ecNumber>
        </recommendedName>
        <alternativeName>
            <fullName>Picornain 2A</fullName>
        </alternativeName>
        <alternativeName>
            <fullName>Protein 2A</fullName>
        </alternativeName>
    </component>
    <component>
        <recommendedName>
            <fullName>Protein 2B</fullName>
            <shortName>P2B</shortName>
        </recommendedName>
    </component>
    <component>
        <recommendedName>
            <fullName>Protein 2C</fullName>
            <shortName>P2C</shortName>
            <ecNumber evidence="2">3.6.1.15</ecNumber>
        </recommendedName>
    </component>
    <component>
        <recommendedName>
            <fullName>P3</fullName>
        </recommendedName>
    </component>
    <component>
        <recommendedName>
            <fullName>Protein 3AB</fullName>
        </recommendedName>
    </component>
    <component>
        <recommendedName>
            <fullName>Protein 3A</fullName>
            <shortName>P3A</shortName>
        </recommendedName>
    </component>
    <component>
        <recommendedName>
            <fullName>Viral protein genome-linked</fullName>
            <shortName>VPg</shortName>
        </recommendedName>
        <alternativeName>
            <fullName>Protein 3B</fullName>
            <shortName>P3B</shortName>
        </alternativeName>
    </component>
    <component>
        <recommendedName>
            <fullName>Protein 3CD</fullName>
            <ecNumber>3.4.22.28</ecNumber>
        </recommendedName>
    </component>
    <component>
        <recommendedName>
            <fullName evidence="11">Protease 3C</fullName>
            <ecNumber evidence="11">3.4.22.28</ecNumber>
        </recommendedName>
        <alternativeName>
            <fullName evidence="11">Picornain 3C</fullName>
            <shortName evidence="11">P3C</shortName>
        </alternativeName>
    </component>
    <component>
        <recommendedName>
            <fullName evidence="9">RNA-directed RNA polymerase</fullName>
            <shortName>RdRp</shortName>
            <ecNumber evidence="9">2.7.7.48</ecNumber>
        </recommendedName>
        <alternativeName>
            <fullName>3D polymerase</fullName>
            <shortName>3Dpol</shortName>
        </alternativeName>
        <alternativeName>
            <fullName>Protein 3D</fullName>
            <shortName>3D</shortName>
        </alternativeName>
    </component>
</protein>
<organism>
    <name type="scientific">Human rhinovirus A serotype 89 (strain 41467-Gallo)</name>
    <name type="common">HRV-89</name>
    <dbReference type="NCBI Taxonomy" id="650130"/>
    <lineage>
        <taxon>Viruses</taxon>
        <taxon>Riboviria</taxon>
        <taxon>Orthornavirae</taxon>
        <taxon>Pisuviricota</taxon>
        <taxon>Pisoniviricetes</taxon>
        <taxon>Picornavirales</taxon>
        <taxon>Picornaviridae</taxon>
        <taxon>Ensavirinae</taxon>
        <taxon>Enterovirus</taxon>
        <taxon>Rhinovirus A</taxon>
    </lineage>
</organism>
<proteinExistence type="evidence at protein level"/>
<reference key="1">
    <citation type="journal article" date="1987" name="Proc. Natl. Acad. Sci. U.S.A.">
        <title>Evolutionary relationships within the human rhinovirus genus: comparison of serotypes 89, 2, and 14.</title>
        <authorList>
            <person name="Duechler M."/>
            <person name="Skern T."/>
            <person name="Sommergruber W."/>
            <person name="Neubauer C."/>
            <person name="Gruendler P."/>
            <person name="Fogy I."/>
            <person name="Blaas D."/>
            <person name="Kuechler E."/>
        </authorList>
    </citation>
    <scope>NUCLEOTIDE SEQUENCE [GENOMIC RNA]</scope>
</reference>
<reference key="2">
    <citation type="journal article" date="2012" name="Adv. Virol.">
        <title>Productive entry pathways of human rhinoviruses.</title>
        <authorList>
            <person name="Fuchs R."/>
            <person name="Blaas D."/>
        </authorList>
    </citation>
    <scope>REVIEW</scope>
</reference>
<dbReference type="EC" id="3.4.22.29" evidence="2"/>
<dbReference type="EC" id="3.6.1.15" evidence="2"/>
<dbReference type="EC" id="3.4.22.28" evidence="11"/>
<dbReference type="EC" id="2.7.7.48" evidence="9"/>
<dbReference type="EMBL" id="M16248">
    <property type="protein sequence ID" value="AAA45762.1"/>
    <property type="molecule type" value="Genomic_RNA"/>
</dbReference>
<dbReference type="PIR" id="A29862">
    <property type="entry name" value="GNNY89"/>
</dbReference>
<dbReference type="PDB" id="9FX9">
    <property type="method" value="EM"/>
    <property type="resolution" value="1.96 A"/>
    <property type="chains" value="A=635-845, B=83-328, C=339-567"/>
</dbReference>
<dbReference type="PDBsum" id="9FX9"/>
<dbReference type="EMDB" id="EMD-10222"/>
<dbReference type="EMDB" id="EMD-50840"/>
<dbReference type="EMDB" id="EMD-50844"/>
<dbReference type="SMR" id="P07210"/>
<dbReference type="MEROPS" id="C03.007"/>
<dbReference type="MEROPS" id="C03.021"/>
<dbReference type="MEROPS" id="N08.001"/>
<dbReference type="Proteomes" id="UP000007070">
    <property type="component" value="Segment"/>
</dbReference>
<dbReference type="GO" id="GO:0044162">
    <property type="term" value="C:host cell cytoplasmic vesicle membrane"/>
    <property type="evidence" value="ECO:0007669"/>
    <property type="project" value="UniProtKB-SubCell"/>
</dbReference>
<dbReference type="GO" id="GO:0042025">
    <property type="term" value="C:host cell nucleus"/>
    <property type="evidence" value="ECO:0007669"/>
    <property type="project" value="UniProtKB-SubCell"/>
</dbReference>
<dbReference type="GO" id="GO:0016020">
    <property type="term" value="C:membrane"/>
    <property type="evidence" value="ECO:0007669"/>
    <property type="project" value="UniProtKB-KW"/>
</dbReference>
<dbReference type="GO" id="GO:0039618">
    <property type="term" value="C:T=pseudo3 icosahedral viral capsid"/>
    <property type="evidence" value="ECO:0007669"/>
    <property type="project" value="UniProtKB-KW"/>
</dbReference>
<dbReference type="GO" id="GO:0005524">
    <property type="term" value="F:ATP binding"/>
    <property type="evidence" value="ECO:0007669"/>
    <property type="project" value="UniProtKB-KW"/>
</dbReference>
<dbReference type="GO" id="GO:0015267">
    <property type="term" value="F:channel activity"/>
    <property type="evidence" value="ECO:0007669"/>
    <property type="project" value="UniProtKB-KW"/>
</dbReference>
<dbReference type="GO" id="GO:0004197">
    <property type="term" value="F:cysteine-type endopeptidase activity"/>
    <property type="evidence" value="ECO:0007669"/>
    <property type="project" value="UniProtKB-EC"/>
</dbReference>
<dbReference type="GO" id="GO:0017111">
    <property type="term" value="F:ribonucleoside triphosphate phosphatase activity"/>
    <property type="evidence" value="ECO:0007669"/>
    <property type="project" value="UniProtKB-EC"/>
</dbReference>
<dbReference type="GO" id="GO:0003723">
    <property type="term" value="F:RNA binding"/>
    <property type="evidence" value="ECO:0007669"/>
    <property type="project" value="UniProtKB-KW"/>
</dbReference>
<dbReference type="GO" id="GO:0003724">
    <property type="term" value="F:RNA helicase activity"/>
    <property type="evidence" value="ECO:0007669"/>
    <property type="project" value="InterPro"/>
</dbReference>
<dbReference type="GO" id="GO:0003968">
    <property type="term" value="F:RNA-directed RNA polymerase activity"/>
    <property type="evidence" value="ECO:0007669"/>
    <property type="project" value="UniProtKB-KW"/>
</dbReference>
<dbReference type="GO" id="GO:0005198">
    <property type="term" value="F:structural molecule activity"/>
    <property type="evidence" value="ECO:0007669"/>
    <property type="project" value="InterPro"/>
</dbReference>
<dbReference type="GO" id="GO:0008270">
    <property type="term" value="F:zinc ion binding"/>
    <property type="evidence" value="ECO:0007669"/>
    <property type="project" value="UniProtKB-KW"/>
</dbReference>
<dbReference type="GO" id="GO:0006260">
    <property type="term" value="P:DNA replication"/>
    <property type="evidence" value="ECO:0007669"/>
    <property type="project" value="UniProtKB-KW"/>
</dbReference>
<dbReference type="GO" id="GO:0006351">
    <property type="term" value="P:DNA-templated transcription"/>
    <property type="evidence" value="ECO:0007669"/>
    <property type="project" value="InterPro"/>
</dbReference>
<dbReference type="GO" id="GO:0075509">
    <property type="term" value="P:endocytosis involved in viral entry into host cell"/>
    <property type="evidence" value="ECO:0007669"/>
    <property type="project" value="UniProtKB-KW"/>
</dbReference>
<dbReference type="GO" id="GO:0034220">
    <property type="term" value="P:monoatomic ion transmembrane transport"/>
    <property type="evidence" value="ECO:0007669"/>
    <property type="project" value="UniProtKB-KW"/>
</dbReference>
<dbReference type="GO" id="GO:0006508">
    <property type="term" value="P:proteolysis"/>
    <property type="evidence" value="ECO:0007669"/>
    <property type="project" value="UniProtKB-KW"/>
</dbReference>
<dbReference type="GO" id="GO:0044694">
    <property type="term" value="P:symbiont genome entry into host cell via pore formation in plasma membrane"/>
    <property type="evidence" value="ECO:0007669"/>
    <property type="project" value="UniProtKB-KW"/>
</dbReference>
<dbReference type="GO" id="GO:0039520">
    <property type="term" value="P:symbiont-mediated activation of host autophagy"/>
    <property type="evidence" value="ECO:0000250"/>
    <property type="project" value="UniProtKB"/>
</dbReference>
<dbReference type="GO" id="GO:0039540">
    <property type="term" value="P:symbiont-mediated suppression of host cytoplasmic pattern recognition receptor signaling pathway via inhibition of RIG-I activity"/>
    <property type="evidence" value="ECO:0007669"/>
    <property type="project" value="UniProtKB-KW"/>
</dbReference>
<dbReference type="GO" id="GO:0039522">
    <property type="term" value="P:symbiont-mediated suppression of host mRNA export from nucleus"/>
    <property type="evidence" value="ECO:0007669"/>
    <property type="project" value="UniProtKB-KW"/>
</dbReference>
<dbReference type="GO" id="GO:0039694">
    <property type="term" value="P:viral RNA genome replication"/>
    <property type="evidence" value="ECO:0007669"/>
    <property type="project" value="InterPro"/>
</dbReference>
<dbReference type="GO" id="GO:0019062">
    <property type="term" value="P:virion attachment to host cell"/>
    <property type="evidence" value="ECO:0007669"/>
    <property type="project" value="UniProtKB-KW"/>
</dbReference>
<dbReference type="CDD" id="cd00205">
    <property type="entry name" value="rhv_like"/>
    <property type="match status" value="3"/>
</dbReference>
<dbReference type="FunFam" id="2.40.10.10:FF:000020">
    <property type="entry name" value="Genome polyprotein"/>
    <property type="match status" value="1"/>
</dbReference>
<dbReference type="FunFam" id="2.60.120.20:FF:000001">
    <property type="entry name" value="Genome polyprotein"/>
    <property type="match status" value="1"/>
</dbReference>
<dbReference type="FunFam" id="2.60.120.20:FF:000002">
    <property type="entry name" value="Genome polyprotein"/>
    <property type="match status" value="1"/>
</dbReference>
<dbReference type="FunFam" id="2.60.120.20:FF:000003">
    <property type="entry name" value="Genome polyprotein"/>
    <property type="match status" value="1"/>
</dbReference>
<dbReference type="FunFam" id="3.30.70.270:FF:000008">
    <property type="entry name" value="Genome polyprotein"/>
    <property type="match status" value="1"/>
</dbReference>
<dbReference type="FunFam" id="4.10.880.10:FF:000002">
    <property type="entry name" value="Genome polyprotein"/>
    <property type="match status" value="1"/>
</dbReference>
<dbReference type="Gene3D" id="1.20.960.20">
    <property type="match status" value="1"/>
</dbReference>
<dbReference type="Gene3D" id="2.60.120.20">
    <property type="match status" value="3"/>
</dbReference>
<dbReference type="Gene3D" id="3.30.70.270">
    <property type="match status" value="1"/>
</dbReference>
<dbReference type="Gene3D" id="6.10.20.20">
    <property type="entry name" value="Poliovirus 3A protein-like"/>
    <property type="match status" value="1"/>
</dbReference>
<dbReference type="Gene3D" id="4.10.880.10">
    <property type="entry name" value="Poliovirus 3D polymerase Domain 1 (Nucleotidyltransferase)"/>
    <property type="match status" value="2"/>
</dbReference>
<dbReference type="Gene3D" id="2.40.10.10">
    <property type="entry name" value="Trypsin-like serine proteases"/>
    <property type="match status" value="4"/>
</dbReference>
<dbReference type="InterPro" id="IPR043502">
    <property type="entry name" value="DNA/RNA_pol_sf"/>
</dbReference>
<dbReference type="InterPro" id="IPR000605">
    <property type="entry name" value="Helicase_SF3_ssDNA/RNA_vir"/>
</dbReference>
<dbReference type="InterPro" id="IPR014759">
    <property type="entry name" value="Helicase_SF3_ssRNA_vir"/>
</dbReference>
<dbReference type="InterPro" id="IPR027417">
    <property type="entry name" value="P-loop_NTPase"/>
</dbReference>
<dbReference type="InterPro" id="IPR014838">
    <property type="entry name" value="P3A"/>
</dbReference>
<dbReference type="InterPro" id="IPR036203">
    <property type="entry name" value="P3A_soluble_dom"/>
</dbReference>
<dbReference type="InterPro" id="IPR044067">
    <property type="entry name" value="PCV_3C_PRO"/>
</dbReference>
<dbReference type="InterPro" id="IPR000081">
    <property type="entry name" value="Peptidase_C3"/>
</dbReference>
<dbReference type="InterPro" id="IPR000199">
    <property type="entry name" value="Peptidase_C3A/C3B_picornavir"/>
</dbReference>
<dbReference type="InterPro" id="IPR009003">
    <property type="entry name" value="Peptidase_S1_PA"/>
</dbReference>
<dbReference type="InterPro" id="IPR043504">
    <property type="entry name" value="Peptidase_S1_PA_chymotrypsin"/>
</dbReference>
<dbReference type="InterPro" id="IPR003138">
    <property type="entry name" value="Pico_P1A"/>
</dbReference>
<dbReference type="InterPro" id="IPR002527">
    <property type="entry name" value="Pico_P2B"/>
</dbReference>
<dbReference type="InterPro" id="IPR001676">
    <property type="entry name" value="Picornavirus_capsid"/>
</dbReference>
<dbReference type="InterPro" id="IPR043128">
    <property type="entry name" value="Rev_trsase/Diguanyl_cyclase"/>
</dbReference>
<dbReference type="InterPro" id="IPR033703">
    <property type="entry name" value="Rhv-like"/>
</dbReference>
<dbReference type="InterPro" id="IPR001205">
    <property type="entry name" value="RNA-dir_pol_C"/>
</dbReference>
<dbReference type="InterPro" id="IPR007094">
    <property type="entry name" value="RNA-dir_pol_PSvirus"/>
</dbReference>
<dbReference type="InterPro" id="IPR029053">
    <property type="entry name" value="Viral_coat"/>
</dbReference>
<dbReference type="Pfam" id="PF08727">
    <property type="entry name" value="P3A"/>
    <property type="match status" value="1"/>
</dbReference>
<dbReference type="Pfam" id="PF00548">
    <property type="entry name" value="Peptidase_C3"/>
    <property type="match status" value="1"/>
</dbReference>
<dbReference type="Pfam" id="PF02226">
    <property type="entry name" value="Pico_P1A"/>
    <property type="match status" value="1"/>
</dbReference>
<dbReference type="Pfam" id="PF00947">
    <property type="entry name" value="Pico_P2A"/>
    <property type="match status" value="1"/>
</dbReference>
<dbReference type="Pfam" id="PF01552">
    <property type="entry name" value="Pico_P2B"/>
    <property type="match status" value="1"/>
</dbReference>
<dbReference type="Pfam" id="PF00680">
    <property type="entry name" value="RdRP_1"/>
    <property type="match status" value="1"/>
</dbReference>
<dbReference type="Pfam" id="PF00073">
    <property type="entry name" value="Rhv"/>
    <property type="match status" value="3"/>
</dbReference>
<dbReference type="Pfam" id="PF00910">
    <property type="entry name" value="RNA_helicase"/>
    <property type="match status" value="1"/>
</dbReference>
<dbReference type="SUPFAM" id="SSF56672">
    <property type="entry name" value="DNA/RNA polymerases"/>
    <property type="match status" value="1"/>
</dbReference>
<dbReference type="SUPFAM" id="SSF52540">
    <property type="entry name" value="P-loop containing nucleoside triphosphate hydrolases"/>
    <property type="match status" value="1"/>
</dbReference>
<dbReference type="SUPFAM" id="SSF88633">
    <property type="entry name" value="Positive stranded ssRNA viruses"/>
    <property type="match status" value="2"/>
</dbReference>
<dbReference type="SUPFAM" id="SSF89043">
    <property type="entry name" value="Soluble domain of poliovirus core protein 3a"/>
    <property type="match status" value="1"/>
</dbReference>
<dbReference type="SUPFAM" id="SSF50494">
    <property type="entry name" value="Trypsin-like serine proteases"/>
    <property type="match status" value="2"/>
</dbReference>
<dbReference type="PROSITE" id="PS51874">
    <property type="entry name" value="PCV_3C_PRO"/>
    <property type="match status" value="1"/>
</dbReference>
<dbReference type="PROSITE" id="PS50507">
    <property type="entry name" value="RDRP_SSRNA_POS"/>
    <property type="match status" value="1"/>
</dbReference>
<dbReference type="PROSITE" id="PS51218">
    <property type="entry name" value="SF3_HELICASE_2"/>
    <property type="match status" value="1"/>
</dbReference>
<feature type="initiator methionine" description="Removed; by host" evidence="2">
    <location>
        <position position="1"/>
    </location>
</feature>
<feature type="chain" id="PRO_0000426566" description="Genome polyprotein">
    <location>
        <begin position="2"/>
        <end position="2164"/>
    </location>
</feature>
<feature type="chain" id="PRO_0000426567" description="P1">
    <location>
        <begin position="2"/>
        <end position="866"/>
    </location>
</feature>
<feature type="chain" id="PRO_0000426568" description="Capsid protein VP0">
    <location>
        <begin position="2"/>
        <end position="336"/>
    </location>
</feature>
<feature type="chain" id="PRO_0000426569" description="Capsid protein VP4">
    <location>
        <begin position="2"/>
        <end position="69"/>
    </location>
</feature>
<feature type="chain" id="PRO_0000426570" description="Capsid protein VP2">
    <location>
        <begin position="70"/>
        <end position="336"/>
    </location>
</feature>
<feature type="chain" id="PRO_0000426571" description="Capsid protein VP3">
    <location>
        <begin position="337"/>
        <end position="568"/>
    </location>
</feature>
<feature type="chain" id="PRO_0000426572" description="Capsid protein VP1">
    <location>
        <begin position="569"/>
        <end position="866"/>
    </location>
</feature>
<feature type="chain" id="PRO_0000426573" description="P2">
    <location>
        <begin position="867"/>
        <end position="1424"/>
    </location>
</feature>
<feature type="chain" id="PRO_0000426574" description="Protease 2A">
    <location>
        <begin position="867"/>
        <end position="1008"/>
    </location>
</feature>
<feature type="chain" id="PRO_0000040052" description="Protein 2B">
    <location>
        <begin position="1009"/>
        <end position="1103"/>
    </location>
</feature>
<feature type="chain" id="PRO_0000040053" description="Protein 2C">
    <location>
        <begin position="1104"/>
        <end position="1424"/>
    </location>
</feature>
<feature type="chain" id="PRO_0000426575" description="P3">
    <location>
        <begin position="1425"/>
        <end position="2164"/>
    </location>
</feature>
<feature type="chain" id="PRO_0000426576" description="Protein 3AB">
    <location>
        <begin position="1425"/>
        <end position="1521"/>
    </location>
</feature>
<feature type="chain" id="PRO_0000040054" description="Protein 3A">
    <location>
        <begin position="1425"/>
        <end position="1500"/>
    </location>
</feature>
<feature type="chain" id="PRO_0000426577" description="Viral protein genome-linked">
    <location>
        <begin position="1501"/>
        <end position="1521"/>
    </location>
</feature>
<feature type="chain" id="PRO_0000426578" description="Protein 3CD">
    <location>
        <begin position="1522"/>
        <end position="2164"/>
    </location>
</feature>
<feature type="chain" id="PRO_0000426579" description="Protease 3C">
    <location>
        <begin position="1522"/>
        <end position="1704"/>
    </location>
</feature>
<feature type="chain" id="PRO_0000426580" description="RNA-directed RNA polymerase">
    <location>
        <begin position="1705"/>
        <end position="2164"/>
    </location>
</feature>
<feature type="topological domain" description="Cytoplasmic" evidence="8">
    <location>
        <begin position="2"/>
        <end position="1477"/>
    </location>
</feature>
<feature type="intramembrane region" evidence="8">
    <location>
        <begin position="1478"/>
        <end position="1493"/>
    </location>
</feature>
<feature type="topological domain" description="Cytoplasmic" evidence="8">
    <location>
        <begin position="1494"/>
        <end position="2164"/>
    </location>
</feature>
<feature type="domain" description="SF3 helicase" evidence="10">
    <location>
        <begin position="1197"/>
        <end position="1357"/>
    </location>
</feature>
<feature type="domain" description="Peptidase C3" evidence="11">
    <location>
        <begin position="1522"/>
        <end position="1700"/>
    </location>
</feature>
<feature type="domain" description="RdRp catalytic" evidence="9">
    <location>
        <begin position="1932"/>
        <end position="2045"/>
    </location>
</feature>
<feature type="zinc finger region" description="C4-type; degenerate" evidence="1">
    <location>
        <begin position="1365"/>
        <end position="1381"/>
    </location>
</feature>
<feature type="region of interest" description="Disordered" evidence="12">
    <location>
        <begin position="208"/>
        <end position="239"/>
    </location>
</feature>
<feature type="region of interest" description="Amphipathic alpha-helix" evidence="8">
    <location>
        <begin position="572"/>
        <end position="588"/>
    </location>
</feature>
<feature type="region of interest" description="Oligomerization" evidence="2">
    <location>
        <begin position="1104"/>
        <end position="1237"/>
    </location>
</feature>
<feature type="region of interest" description="Membrane-binding" evidence="2">
    <location>
        <begin position="1104"/>
        <end position="1173"/>
    </location>
</feature>
<feature type="region of interest" description="RNA-binding" evidence="2">
    <location>
        <begin position="1125"/>
        <end position="1129"/>
    </location>
</feature>
<feature type="region of interest" description="RNA-binding" evidence="2">
    <location>
        <begin position="1408"/>
        <end position="1415"/>
    </location>
</feature>
<feature type="region of interest" description="Oligomerization" evidence="2">
    <location>
        <begin position="1419"/>
        <end position="1424"/>
    </location>
</feature>
<feature type="active site" description="For protease 2A activity" evidence="2">
    <location>
        <position position="884"/>
    </location>
</feature>
<feature type="active site" description="For protease 2A activity" evidence="2">
    <location>
        <position position="901"/>
    </location>
</feature>
<feature type="active site" description="For protease 2A activity" evidence="2">
    <location>
        <position position="972"/>
    </location>
</feature>
<feature type="active site" description="For protease 3C activity" evidence="11">
    <location>
        <position position="1561"/>
    </location>
</feature>
<feature type="active site" description="For protease 3C activity" evidence="11">
    <location>
        <position position="1592"/>
    </location>
</feature>
<feature type="active site" description="For protease 3C activity" evidence="11">
    <location>
        <position position="1668"/>
    </location>
</feature>
<feature type="binding site" evidence="6">
    <location>
        <position position="918"/>
    </location>
    <ligand>
        <name>Zn(2+)</name>
        <dbReference type="ChEBI" id="CHEBI:29105"/>
        <label>1</label>
        <note>structural</note>
    </ligand>
</feature>
<feature type="binding site" evidence="6">
    <location>
        <position position="920"/>
    </location>
    <ligand>
        <name>Zn(2+)</name>
        <dbReference type="ChEBI" id="CHEBI:29105"/>
        <label>1</label>
        <note>structural</note>
    </ligand>
</feature>
<feature type="binding site" evidence="6">
    <location>
        <position position="978"/>
    </location>
    <ligand>
        <name>Zn(2+)</name>
        <dbReference type="ChEBI" id="CHEBI:29105"/>
        <label>1</label>
        <note>structural</note>
    </ligand>
</feature>
<feature type="binding site" evidence="6">
    <location>
        <position position="980"/>
    </location>
    <ligand>
        <name>Zn(2+)</name>
        <dbReference type="ChEBI" id="CHEBI:29105"/>
        <label>1</label>
        <note>structural</note>
    </ligand>
</feature>
<feature type="binding site" evidence="10">
    <location>
        <begin position="1227"/>
        <end position="1234"/>
    </location>
    <ligand>
        <name>ATP</name>
        <dbReference type="ChEBI" id="CHEBI:30616"/>
    </ligand>
</feature>
<feature type="binding site" evidence="1">
    <location>
        <position position="1365"/>
    </location>
    <ligand>
        <name>Zn(2+)</name>
        <dbReference type="ChEBI" id="CHEBI:29105"/>
        <label>2</label>
    </ligand>
</feature>
<feature type="binding site" evidence="1">
    <location>
        <position position="1376"/>
    </location>
    <ligand>
        <name>Zn(2+)</name>
        <dbReference type="ChEBI" id="CHEBI:29105"/>
        <label>2</label>
    </ligand>
</feature>
<feature type="binding site" evidence="1">
    <location>
        <position position="1381"/>
    </location>
    <ligand>
        <name>Zn(2+)</name>
        <dbReference type="ChEBI" id="CHEBI:29105"/>
        <label>2</label>
    </ligand>
</feature>
<feature type="binding site" evidence="2">
    <location>
        <position position="1938"/>
    </location>
    <ligand>
        <name>Mg(2+)</name>
        <dbReference type="ChEBI" id="CHEBI:18420"/>
        <label>1</label>
        <note>catalytic; for RdRp activity</note>
    </ligand>
</feature>
<feature type="binding site" evidence="2">
    <location>
        <position position="1938"/>
    </location>
    <ligand>
        <name>Mg(2+)</name>
        <dbReference type="ChEBI" id="CHEBI:18420"/>
        <label>2</label>
        <note>catalytic; for RdRp activity</note>
    </ligand>
</feature>
<feature type="binding site" evidence="2">
    <location>
        <position position="2031"/>
    </location>
    <ligand>
        <name>Mg(2+)</name>
        <dbReference type="ChEBI" id="CHEBI:18420"/>
        <label>1</label>
        <note>catalytic; for RdRp activity</note>
    </ligand>
</feature>
<feature type="binding site" evidence="2">
    <location>
        <position position="2031"/>
    </location>
    <ligand>
        <name>Mg(2+)</name>
        <dbReference type="ChEBI" id="CHEBI:18420"/>
        <label>2</label>
        <note>catalytic; for RdRp activity</note>
    </ligand>
</feature>
<feature type="site" description="Cleavage; by autolysis" evidence="2">
    <location>
        <begin position="69"/>
        <end position="70"/>
    </location>
</feature>
<feature type="site" description="Cleavage; by protease 3C" evidence="3">
    <location>
        <begin position="336"/>
        <end position="337"/>
    </location>
</feature>
<feature type="site" description="Cleavage; by autolysis" evidence="3">
    <location>
        <begin position="866"/>
        <end position="867"/>
    </location>
</feature>
<feature type="site" description="Cleavage; by protease 3C" evidence="3">
    <location>
        <begin position="1008"/>
        <end position="1009"/>
    </location>
</feature>
<feature type="site" description="Cleavage; by protease 3C" evidence="3">
    <location>
        <begin position="1103"/>
        <end position="1104"/>
    </location>
</feature>
<feature type="site" description="Involved in the interaction with host RTN3" evidence="7">
    <location>
        <position position="1128"/>
    </location>
</feature>
<feature type="site" description="Cleavage; by protease 3C" evidence="3">
    <location>
        <begin position="1424"/>
        <end position="1425"/>
    </location>
</feature>
<feature type="site" description="Cleavage; by protease 3C" evidence="3">
    <location>
        <begin position="1500"/>
        <end position="1501"/>
    </location>
</feature>
<feature type="site" description="Cleavage; by protease 3C" evidence="3">
    <location>
        <begin position="1521"/>
        <end position="1522"/>
    </location>
</feature>
<feature type="site" description="Cleavage; by protease 3C" evidence="3">
    <location>
        <begin position="1704"/>
        <end position="1705"/>
    </location>
</feature>
<feature type="modified residue" description="O-(5'-phospho-RNA)-tyrosine" evidence="2">
    <location>
        <position position="1503"/>
    </location>
</feature>
<feature type="lipid moiety-binding region" description="N-myristoyl glycine; by host" evidence="2">
    <location>
        <position position="2"/>
    </location>
</feature>
<accession>P07210</accession>
<accession>Q82096</accession>
<accession>Q82097</accession>
<accession>Q82098</accession>
<accession>Q82099</accession>
<accession>Q82100</accession>
<accession>Q82101</accession>
<accession>Q82102</accession>
<accession>Q82103</accession>
<accession>Q82104</accession>
<accession>Q82105</accession>
<evidence type="ECO:0000250" key="1">
    <source>
        <dbReference type="UniProtKB" id="B9VUU3"/>
    </source>
</evidence>
<evidence type="ECO:0000250" key="2">
    <source>
        <dbReference type="UniProtKB" id="P03300"/>
    </source>
</evidence>
<evidence type="ECO:0000250" key="3">
    <source>
        <dbReference type="UniProtKB" id="P03301"/>
    </source>
</evidence>
<evidence type="ECO:0000250" key="4">
    <source>
        <dbReference type="UniProtKB" id="P03303"/>
    </source>
</evidence>
<evidence type="ECO:0000250" key="5">
    <source>
        <dbReference type="UniProtKB" id="P03313"/>
    </source>
</evidence>
<evidence type="ECO:0000250" key="6">
    <source>
        <dbReference type="UniProtKB" id="P04936"/>
    </source>
</evidence>
<evidence type="ECO:0000250" key="7">
    <source>
        <dbReference type="UniProtKB" id="Q66478"/>
    </source>
</evidence>
<evidence type="ECO:0000255" key="8"/>
<evidence type="ECO:0000255" key="9">
    <source>
        <dbReference type="PROSITE-ProRule" id="PRU00539"/>
    </source>
</evidence>
<evidence type="ECO:0000255" key="10">
    <source>
        <dbReference type="PROSITE-ProRule" id="PRU00551"/>
    </source>
</evidence>
<evidence type="ECO:0000255" key="11">
    <source>
        <dbReference type="PROSITE-ProRule" id="PRU01222"/>
    </source>
</evidence>
<evidence type="ECO:0000256" key="12">
    <source>
        <dbReference type="SAM" id="MobiDB-lite"/>
    </source>
</evidence>
<evidence type="ECO:0000305" key="13"/>
<name>POLG_HRV8A</name>
<comment type="function">
    <molecule>Capsid protein VP1</molecule>
    <text evidence="2">Forms an icosahedral capsid of pseudo T=3 symmetry with capsid proteins VP2 and VP3 (By similarity). The capsid is 300 Angstroms in diameter, composed of 60 copies of each capsid protein and enclosing the viral positive strand RNA genome (By similarity). Capsid protein VP1 mainly forms the vertices of the capsid (By similarity). Capsid protein VP1 interacts with host cell receptor to provide virion attachment to target host cells (By similarity). This attachment induces virion internalization (By similarity). Tyrosine kinases are probably involved in the entry process (By similarity). After binding to its receptor, the capsid undergoes conformational changes (By similarity). Capsid protein VP1 N-terminus (that contains an amphipathic alpha-helix) and capsid protein VP4 are externalized (By similarity). Together, they shape a pore in the host membrane through which viral genome is translocated to host cell cytoplasm (By similarity).</text>
</comment>
<comment type="function">
    <molecule>Capsid protein VP2</molecule>
    <text evidence="2">Forms an icosahedral capsid of pseudo T=3 symmetry with capsid proteins VP2 and VP3 (By similarity). The capsid is 300 Angstroms in diameter, composed of 60 copies of each capsid protein and enclosing the viral positive strand RNA genome (By similarity).</text>
</comment>
<comment type="function">
    <molecule>Capsid protein VP3</molecule>
    <text evidence="2">Forms an icosahedral capsid of pseudo T=3 symmetry with capsid proteins VP2 and VP3 (By similarity). The capsid is 300 Angstroms in diameter, composed of 60 copies of each capsid protein and enclosing the viral positive strand RNA genome (By similarity).</text>
</comment>
<comment type="function">
    <molecule>Capsid protein VP4</molecule>
    <text evidence="2">Lies on the inner surface of the capsid shell (By similarity). After binding to the host receptor, the capsid undergoes conformational changes (By similarity). Capsid protein VP4 is released, Capsid protein VP1 N-terminus is externalized, and together, they shape a pore in the host membrane through which the viral genome is translocated into the host cell cytoplasm (By similarity).</text>
</comment>
<comment type="function">
    <molecule>Capsid protein VP0</molecule>
    <text evidence="2">Component of immature procapsids, which is cleaved into capsid proteins VP4 and VP2 after maturation (By similarity). Allows the capsid to remain inactive before the maturation step (By similarity).</text>
</comment>
<comment type="function">
    <molecule>Protease 2A</molecule>
    <text evidence="2 3 6">Cysteine protease that cleaves viral polyprotein and specific host proteins (By similarity). It is responsible for the autocatalytic cleavage between the P1 and P2 regions, which is the first cleavage occurring in the polyprotein (By similarity). Also cleaves the host translation initiation factor EIF4G1, in order to shut down the capped cellular mRNA translation (By similarity). Inhibits the host nucleus-cytoplasm protein and RNA trafficking by cleaving host members of the nuclear pores (By similarity). Counteracts stress granule formation probably by antagonizing its assembly or promoting its dissassembly (By similarity).</text>
</comment>
<comment type="function">
    <molecule>Protein 2B</molecule>
    <text evidence="2">Plays an essential role in the virus replication cycle by acting as a viroporin. Creates a pore in the host endoplasmic reticulum and as a consequence releases Ca2+ in the cytoplasm of infected cell. In turn, high levels of cytoplasmic calcium may trigger membrane trafficking and transport of viral ER-associated proteins to viroplasms, sites of viral genome replication.</text>
</comment>
<comment type="function">
    <molecule>Protein 2C</molecule>
    <text evidence="2">Induces and associates with structural rearrangements of intracellular membranes. Displays RNA-binding, nucleotide binding and NTPase activities. May play a role in virion morphogenesis and viral RNA encapsidation by interacting with the capsid protein VP3.</text>
</comment>
<comment type="function">
    <molecule>Protein 3AB</molecule>
    <text evidence="2">Localizes the viral replication complex to the surface of membranous vesicles. Together with protein 3CD binds the Cis-Active RNA Element (CRE) which is involved in RNA synthesis initiation. Acts as a cofactor to stimulate the activity of 3D polymerase, maybe through a nucleid acid chaperone activity.</text>
</comment>
<comment type="function">
    <molecule>Protein 3A</molecule>
    <text evidence="2 6">Localizes the viral replication complex to the surface of membranous vesicles (By similarity). It inhibits host cell endoplasmic reticulum-to-Golgi apparatus transport and causes the disassembly of the Golgi complex, possibly through GBF1 interaction (By similarity). This would result in depletion of MHC, trail receptors and IFN receptors at the host cell surface (By similarity). Plays an essential role in viral RNA replication by recruiting ACBD3 and PI4KB at the viral replication sites, thereby allowing the formation of the rearranged membranous structures where viral replication takes place (By similarity).</text>
</comment>
<comment type="function">
    <molecule>Viral protein genome-linked</molecule>
    <text evidence="2">Acts as a primer for viral RNA replication and remains covalently bound to viral genomic RNA. VPg is uridylylated prior to priming replication into VPg-pUpU. The oriI viral genomic sequence may act as a template for this. The VPg-pUpU is then used as primer on the genomic RNA poly(A) by the RNA-dependent RNA polymerase to replicate the viral genome. During genome replication, the VPg-RNA linkage is removed by the host TDP2, thereby accelerating replication. During the late stage of the replication cycle, host TDP2 is excluded from sites of viral RNA synthesis and encapsidation, allowing for the generation of progeny virions.</text>
</comment>
<comment type="function">
    <molecule>Protein 3CD</molecule>
    <text evidence="2">Involved in the viral replication complex and viral polypeptide maturation. It exhibits protease activity with a specificity and catalytic efficiency that is different from protease 3C. Protein 3CD lacks polymerase activity. Protein 3CD binds to the 5'UTR of the viral genome.</text>
</comment>
<comment type="function">
    <molecule>RNA-directed RNA polymerase</molecule>
    <text evidence="2">Replicates the viral genomic RNA on the surface of intracellular membranes. May form linear arrays of subunits that propagate along a strong head-to-tail interaction called interface-I. Covalently attaches UMP to a tyrosine of VPg, which is used to prime RNA synthesis. The positive stranded RNA genome is first replicated at virus induced membranous vesicles, creating a dsRNA genomic replication form. This dsRNA is then used as template to synthesize positive stranded RNA genomes. ss(+)RNA genomes are either translated, replicated or encapsidated.</text>
</comment>
<comment type="function">
    <molecule>Protease 3C</molecule>
    <text evidence="2 4">Major viral protease that mediates proteolytic processing of the polyprotein (By similarity). Cleaves host EIF5B, contributing to host translation shutoff (By similarity). Also cleaves host PABPC1, contributing to host translation shutoff (By similarity). Cleaves host NLRP1, triggers host N-glycine-mediated degradation of the autoinhibitory NLRP1 N-terminal fragment (By similarity).</text>
</comment>
<comment type="catalytic activity">
    <molecule>Protein 2C</molecule>
    <reaction evidence="2">
        <text>a ribonucleoside 5'-triphosphate + H2O = a ribonucleoside 5'-diphosphate + phosphate + H(+)</text>
        <dbReference type="Rhea" id="RHEA:23680"/>
        <dbReference type="ChEBI" id="CHEBI:15377"/>
        <dbReference type="ChEBI" id="CHEBI:15378"/>
        <dbReference type="ChEBI" id="CHEBI:43474"/>
        <dbReference type="ChEBI" id="CHEBI:57930"/>
        <dbReference type="ChEBI" id="CHEBI:61557"/>
        <dbReference type="EC" id="3.6.1.15"/>
    </reaction>
</comment>
<comment type="catalytic activity">
    <molecule>Protease 2A</molecule>
    <reaction evidence="2">
        <text>Selective cleavage of Tyr-|-Gly bond in the picornavirus polyprotein.</text>
        <dbReference type="EC" id="3.4.22.29"/>
    </reaction>
</comment>
<comment type="catalytic activity">
    <molecule>RNA-directed RNA polymerase</molecule>
    <reaction evidence="9">
        <text>RNA(n) + a ribonucleoside 5'-triphosphate = RNA(n+1) + diphosphate</text>
        <dbReference type="Rhea" id="RHEA:21248"/>
        <dbReference type="Rhea" id="RHEA-COMP:14527"/>
        <dbReference type="Rhea" id="RHEA-COMP:17342"/>
        <dbReference type="ChEBI" id="CHEBI:33019"/>
        <dbReference type="ChEBI" id="CHEBI:61557"/>
        <dbReference type="ChEBI" id="CHEBI:140395"/>
        <dbReference type="EC" id="2.7.7.48"/>
    </reaction>
</comment>
<comment type="catalytic activity">
    <molecule>Protease 3C</molecule>
    <reaction evidence="11">
        <text>Selective cleavage of Gln-|-Gly bond in the poliovirus polyprotein. In other picornavirus reactions Glu may be substituted for Gln, and Ser or Thr for Gly.</text>
        <dbReference type="EC" id="3.4.22.28"/>
    </reaction>
</comment>
<comment type="cofactor">
    <molecule>RNA-directed RNA polymerase</molecule>
    <cofactor evidence="2">
        <name>Mg(2+)</name>
        <dbReference type="ChEBI" id="CHEBI:18420"/>
    </cofactor>
    <text evidence="2 5">Binds 2 magnesium ions that constitute a dinuclear catalytic metal center (By similarity). The magnesium ions are not prebound but only present for catalysis (By similarity). Requires the presence of 3CDpro or 3CPro (By similarity).</text>
</comment>
<comment type="activity regulation">
    <molecule>RNA-directed RNA polymerase</molecule>
    <text evidence="2">Replication or transcription is subject to high level of random mutations by the nucleotide analog ribavirin.</text>
</comment>
<comment type="subunit">
    <molecule>Capsid protein VP0</molecule>
    <text evidence="2">Interacts with capsid protein VP1 and capsid protein VP3 to form heterotrimeric protomers.</text>
</comment>
<comment type="subunit">
    <molecule>Capsid protein VP1</molecule>
    <text evidence="2">Interacts with capsid protein VP0, and capsid protein VP3 to form heterotrimeric protomers (By similarity). Five protomers subsequently associate to form pentamers which serve as building blocks for the capsid (By similarity). Interacts with capsid protein VP2, capsid protein VP3 and capsid protein VP4 following cleavage of capsid protein VP0 (By similarity).</text>
</comment>
<comment type="subunit">
    <molecule>Capsid protein VP2</molecule>
    <text evidence="2">Interacts with capsid protein VP1 and capsid protein VP3 in the mature capsid.</text>
</comment>
<comment type="subunit">
    <molecule>Capsid protein VP3</molecule>
    <text evidence="2">Interacts with capsid protein VP0 and capsid protein VP1 to form heterotrimeric protomers (By similarity). Five protomers subsequently associate to form pentamers which serve as building blocks for the capsid (By similarity). Interacts with capsid protein VP4 in the mature capsid (By similarity). Interacts with protein 2C; this interaction may be important for virion morphogenesis (By similarity).</text>
</comment>
<comment type="subunit">
    <molecule>Capsid protein VP4</molecule>
    <text evidence="2">Interacts with capsid protein VP1 and capsid protein VP3.</text>
</comment>
<comment type="subunit">
    <molecule>Protease 2A</molecule>
    <text evidence="6">Homodimer.</text>
</comment>
<comment type="subunit">
    <molecule>Protein 2C</molecule>
    <text evidence="2">Homohexamer; forms a hexameric ring structure with 6-fold symmetry characteristic of AAA+ ATPases (By similarity). Interacts (via N-terminus) with host RTN3 (via reticulon domain); this interaction is important for viral replication (By similarity). Interacts with capsid protein VP3; this interaction may be important for virion morphogenesis (By similarity).</text>
</comment>
<comment type="subunit">
    <molecule>Protein 3AB</molecule>
    <text evidence="2">Interacts with protein 3CD.</text>
</comment>
<comment type="subunit">
    <molecule>Protein 3A</molecule>
    <text evidence="2">Homodimer (By similarity). Interacts with host GBF1 (By similarity). Interacts (via GOLD domain) with host ACBD3 (via GOLD domain); this interaction allows the formation of a viral protein 3A/ACBD3 heterotetramer with a 2:2 stoichiometry, which will stimulate the recruitment of host PI4KB in order to synthesize PI4P at the viral RNA replication sites (By similarity).</text>
</comment>
<comment type="subunit">
    <molecule>Viral protein genome-linked</molecule>
    <text evidence="2">Interacts with RNA-directed RNA polymerase.</text>
</comment>
<comment type="subunit">
    <molecule>Protein 3CD</molecule>
    <text evidence="2">Interacts with protein 3AB and with RNA-directed RNA polymerase.</text>
</comment>
<comment type="subunit">
    <molecule>RNA-directed RNA polymerase</molecule>
    <text evidence="2">Interacts with Viral protein genome-linked and with protein 3CD.</text>
</comment>
<comment type="subcellular location">
    <molecule>Capsid protein VP0</molecule>
    <subcellularLocation>
        <location>Virion</location>
    </subcellularLocation>
    <subcellularLocation>
        <location evidence="13">Host cytoplasm</location>
    </subcellularLocation>
</comment>
<comment type="subcellular location">
    <molecule>Capsid protein VP4</molecule>
    <subcellularLocation>
        <location>Virion</location>
    </subcellularLocation>
</comment>
<comment type="subcellular location">
    <molecule>Capsid protein VP2</molecule>
    <subcellularLocation>
        <location evidence="2">Virion</location>
    </subcellularLocation>
    <subcellularLocation>
        <location evidence="13">Host cytoplasm</location>
    </subcellularLocation>
</comment>
<comment type="subcellular location">
    <molecule>Capsid protein VP3</molecule>
    <subcellularLocation>
        <location evidence="2">Virion</location>
    </subcellularLocation>
    <subcellularLocation>
        <location evidence="13">Host cytoplasm</location>
    </subcellularLocation>
</comment>
<comment type="subcellular location">
    <molecule>Capsid protein VP1</molecule>
    <subcellularLocation>
        <location evidence="2">Virion</location>
    </subcellularLocation>
    <subcellularLocation>
        <location evidence="13">Host cytoplasm</location>
    </subcellularLocation>
</comment>
<comment type="subcellular location">
    <molecule>Protein 2B</molecule>
    <subcellularLocation>
        <location evidence="13">Host cytoplasmic vesicle membrane</location>
        <topology evidence="13">Peripheral membrane protein</topology>
        <orientation evidence="13">Cytoplasmic side</orientation>
    </subcellularLocation>
    <text>Probably localizes to the surface of intracellular membrane vesicles that are induced after virus infection as the site for viral RNA replication. These vesicles are derived from the endoplasmic reticulum.</text>
</comment>
<comment type="subcellular location">
    <molecule>Protein 2C</molecule>
    <subcellularLocation>
        <location evidence="13">Host cytoplasmic vesicle membrane</location>
        <topology evidence="13">Peripheral membrane protein</topology>
        <orientation evidence="13">Cytoplasmic side</orientation>
    </subcellularLocation>
    <text>Probably localizes to the surface of intracellular membrane vesicles that are induced after virus infection as the site for viral RNA replication. These vesicles are derived from the endoplasmic reticulum.</text>
</comment>
<comment type="subcellular location">
    <molecule>Protein 3A</molecule>
    <subcellularLocation>
        <location evidence="13">Host cytoplasmic vesicle membrane</location>
        <topology evidence="13">Peripheral membrane protein</topology>
        <orientation evidence="13">Cytoplasmic side</orientation>
    </subcellularLocation>
    <text>Probably localizes to the surface of intracellular membrane vesicles that are induced after virus infection as the site for viral RNA replication. These vesicles are derived from the endoplasmic reticulum.</text>
</comment>
<comment type="subcellular location">
    <molecule>Protein 3AB</molecule>
    <subcellularLocation>
        <location evidence="13">Host cytoplasmic vesicle membrane</location>
        <topology evidence="13">Peripheral membrane protein</topology>
        <orientation evidence="13">Cytoplasmic side</orientation>
    </subcellularLocation>
    <text>Probably localizes to the surface of intracellular membrane vesicles that are induced after virus infection as the site for viral RNA replication. These vesicles are derived from the endoplasmic reticulum.</text>
</comment>
<comment type="subcellular location">
    <molecule>Viral protein genome-linked</molecule>
    <subcellularLocation>
        <location evidence="2">Virion</location>
    </subcellularLocation>
    <subcellularLocation>
        <location evidence="7">Host cytoplasm</location>
    </subcellularLocation>
</comment>
<comment type="subcellular location">
    <molecule>Protease 3C</molecule>
    <subcellularLocation>
        <location>Host cytoplasm</location>
    </subcellularLocation>
</comment>
<comment type="subcellular location">
    <molecule>Protein 3CD</molecule>
    <subcellularLocation>
        <location evidence="2">Host nucleus</location>
    </subcellularLocation>
    <subcellularLocation>
        <location evidence="2">Host cytoplasm</location>
    </subcellularLocation>
    <subcellularLocation>
        <location evidence="13">Host cytoplasmic vesicle membrane</location>
        <topology evidence="13">Peripheral membrane protein</topology>
        <orientation evidence="13">Cytoplasmic side</orientation>
    </subcellularLocation>
    <text>Probably localizes to the surface of intracellular membrane vesicles that are induced after virus infection as the site for viral RNA replication. These vesicles are derived from the endoplasmic reticulum.</text>
</comment>
<comment type="subcellular location">
    <molecule>RNA-directed RNA polymerase</molecule>
    <subcellularLocation>
        <location evidence="13">Host cytoplasmic vesicle membrane</location>
        <topology evidence="13">Peripheral membrane protein</topology>
        <orientation evidence="13">Cytoplasmic side</orientation>
    </subcellularLocation>
    <text>Probably localizes to the surface of intracellular membrane vesicles that are induced after virus infection as the site for viral RNA replication. These vesicles are derived from the endoplasmic reticulum.</text>
</comment>
<comment type="domain">
    <molecule>Protein 2C</molecule>
    <text evidence="1 2">The N-terminus has membrane-binding (By similarity). The N-terminus also displays RNA-binding properties (By similarity). The N-terminus is involved in oligomerization (By similarity). The central part contains an ATPase domain and a degenerate C4-type zinc-finger with only 3 cysteines (By similarity). The C-terminus is involved in RNA-binding (By similarity). The extreme C-terminus contains a region involved in oligomerization (By similarity).</text>
</comment>
<comment type="PTM">
    <molecule>Genome polyprotein</molecule>
    <text evidence="2">Specific enzymatic cleavages in vivo by the viral proteases yield processing intermediates and the mature proteins.</text>
</comment>
<comment type="PTM">
    <molecule>Capsid protein VP0</molecule>
    <text evidence="2">Myristoylation is required for the formation of pentamers during virus assembly. Further assembly of 12 pentamers and a molecule of genomic RNA generates the provirion.</text>
</comment>
<comment type="PTM">
    <molecule>Capsid protein VP0</molecule>
    <text evidence="2">During virion maturation, immature virions are rendered infectious following cleavage of VP0 into VP4 and VP2. This maturation seems to be an autocatalytic event triggered by the presence of RNA in the capsid and it is followed by a conformational change infectious virion.</text>
</comment>
<comment type="PTM">
    <molecule>Capsid protein VP4</molecule>
    <text evidence="2">Myristoylation is required during RNA encapsidation and formation of the mature virus particle.</text>
</comment>
<comment type="PTM">
    <molecule>Viral protein genome-linked</molecule>
    <text evidence="2">VPg is uridylylated by the polymerase into VPg-pUpU. This acts as a nucleotide-peptide primer for the genomic RNA replication.</text>
</comment>
<comment type="similarity">
    <text evidence="13">Belongs to the picornaviruses polyprotein family.</text>
</comment>
<organismHost>
    <name type="scientific">Homo sapiens</name>
    <name type="common">Human</name>
    <dbReference type="NCBI Taxonomy" id="9606"/>
</organismHost>